<keyword id="KW-0067">ATP-binding</keyword>
<keyword id="KW-0227">DNA damage</keyword>
<keyword id="KW-0234">DNA repair</keyword>
<keyword id="KW-0238">DNA-binding</keyword>
<keyword id="KW-0547">Nucleotide-binding</keyword>
<organism>
    <name type="scientific">Phocaeicola vulgatus (strain ATCC 8482 / DSM 1447 / JCM 5826 / CCUG 4940 / NBRC 14291 / NCTC 11154)</name>
    <name type="common">Bacteroides vulgatus</name>
    <dbReference type="NCBI Taxonomy" id="435590"/>
    <lineage>
        <taxon>Bacteria</taxon>
        <taxon>Pseudomonadati</taxon>
        <taxon>Bacteroidota</taxon>
        <taxon>Bacteroidia</taxon>
        <taxon>Bacteroidales</taxon>
        <taxon>Bacteroidaceae</taxon>
        <taxon>Phocaeicola</taxon>
    </lineage>
</organism>
<comment type="function">
    <text evidence="1">This protein is involved in the repair of mismatches in DNA. It is possible that it carries out the mismatch recognition step. This protein has a weak ATPase activity.</text>
</comment>
<comment type="similarity">
    <text evidence="1">Belongs to the DNA mismatch repair MutS family.</text>
</comment>
<protein>
    <recommendedName>
        <fullName evidence="1">DNA mismatch repair protein MutS</fullName>
    </recommendedName>
</protein>
<accession>A6KZM1</accession>
<feature type="chain" id="PRO_0000335117" description="DNA mismatch repair protein MutS">
    <location>
        <begin position="1"/>
        <end position="870"/>
    </location>
</feature>
<feature type="binding site" evidence="1">
    <location>
        <begin position="617"/>
        <end position="624"/>
    </location>
    <ligand>
        <name>ATP</name>
        <dbReference type="ChEBI" id="CHEBI:30616"/>
    </ligand>
</feature>
<dbReference type="EMBL" id="CP000139">
    <property type="protein sequence ID" value="ABR38885.1"/>
    <property type="molecule type" value="Genomic_DNA"/>
</dbReference>
<dbReference type="RefSeq" id="WP_005849895.1">
    <property type="nucleotide sequence ID" value="NZ_CAXVNH010000017.1"/>
</dbReference>
<dbReference type="SMR" id="A6KZM1"/>
<dbReference type="STRING" id="435590.BVU_1195"/>
<dbReference type="PaxDb" id="435590-BVU_1195"/>
<dbReference type="GeneID" id="5302161"/>
<dbReference type="KEGG" id="bvu:BVU_1195"/>
<dbReference type="eggNOG" id="COG0249">
    <property type="taxonomic scope" value="Bacteria"/>
</dbReference>
<dbReference type="HOGENOM" id="CLU_002472_1_3_10"/>
<dbReference type="BioCyc" id="BVUL435590:G1G59-1242-MONOMER"/>
<dbReference type="Proteomes" id="UP000002861">
    <property type="component" value="Chromosome"/>
</dbReference>
<dbReference type="GO" id="GO:0005829">
    <property type="term" value="C:cytosol"/>
    <property type="evidence" value="ECO:0007669"/>
    <property type="project" value="TreeGrafter"/>
</dbReference>
<dbReference type="GO" id="GO:0005524">
    <property type="term" value="F:ATP binding"/>
    <property type="evidence" value="ECO:0007669"/>
    <property type="project" value="UniProtKB-UniRule"/>
</dbReference>
<dbReference type="GO" id="GO:0140664">
    <property type="term" value="F:ATP-dependent DNA damage sensor activity"/>
    <property type="evidence" value="ECO:0007669"/>
    <property type="project" value="InterPro"/>
</dbReference>
<dbReference type="GO" id="GO:0003684">
    <property type="term" value="F:damaged DNA binding"/>
    <property type="evidence" value="ECO:0007669"/>
    <property type="project" value="UniProtKB-UniRule"/>
</dbReference>
<dbReference type="GO" id="GO:0030983">
    <property type="term" value="F:mismatched DNA binding"/>
    <property type="evidence" value="ECO:0007669"/>
    <property type="project" value="InterPro"/>
</dbReference>
<dbReference type="GO" id="GO:0006298">
    <property type="term" value="P:mismatch repair"/>
    <property type="evidence" value="ECO:0007669"/>
    <property type="project" value="UniProtKB-UniRule"/>
</dbReference>
<dbReference type="CDD" id="cd03284">
    <property type="entry name" value="ABC_MutS1"/>
    <property type="match status" value="1"/>
</dbReference>
<dbReference type="FunFam" id="1.10.1420.10:FF:000002">
    <property type="entry name" value="DNA mismatch repair protein MutS"/>
    <property type="match status" value="1"/>
</dbReference>
<dbReference type="FunFam" id="3.40.1170.10:FF:000001">
    <property type="entry name" value="DNA mismatch repair protein MutS"/>
    <property type="match status" value="1"/>
</dbReference>
<dbReference type="Gene3D" id="1.10.1420.10">
    <property type="match status" value="2"/>
</dbReference>
<dbReference type="Gene3D" id="3.40.1170.10">
    <property type="entry name" value="DNA repair protein MutS, domain I"/>
    <property type="match status" value="1"/>
</dbReference>
<dbReference type="Gene3D" id="3.30.420.110">
    <property type="entry name" value="MutS, connector domain"/>
    <property type="match status" value="1"/>
</dbReference>
<dbReference type="Gene3D" id="3.40.50.300">
    <property type="entry name" value="P-loop containing nucleotide triphosphate hydrolases"/>
    <property type="match status" value="1"/>
</dbReference>
<dbReference type="HAMAP" id="MF_00096">
    <property type="entry name" value="MutS"/>
    <property type="match status" value="1"/>
</dbReference>
<dbReference type="InterPro" id="IPR005748">
    <property type="entry name" value="DNA_mismatch_repair_MutS"/>
</dbReference>
<dbReference type="InterPro" id="IPR007695">
    <property type="entry name" value="DNA_mismatch_repair_MutS-lik_N"/>
</dbReference>
<dbReference type="InterPro" id="IPR017261">
    <property type="entry name" value="DNA_mismatch_repair_MutS/MSH"/>
</dbReference>
<dbReference type="InterPro" id="IPR000432">
    <property type="entry name" value="DNA_mismatch_repair_MutS_C"/>
</dbReference>
<dbReference type="InterPro" id="IPR007861">
    <property type="entry name" value="DNA_mismatch_repair_MutS_clamp"/>
</dbReference>
<dbReference type="InterPro" id="IPR007696">
    <property type="entry name" value="DNA_mismatch_repair_MutS_core"/>
</dbReference>
<dbReference type="InterPro" id="IPR016151">
    <property type="entry name" value="DNA_mismatch_repair_MutS_N"/>
</dbReference>
<dbReference type="InterPro" id="IPR036187">
    <property type="entry name" value="DNA_mismatch_repair_MutS_sf"/>
</dbReference>
<dbReference type="InterPro" id="IPR007860">
    <property type="entry name" value="DNA_mmatch_repair_MutS_con_dom"/>
</dbReference>
<dbReference type="InterPro" id="IPR045076">
    <property type="entry name" value="MutS"/>
</dbReference>
<dbReference type="InterPro" id="IPR036678">
    <property type="entry name" value="MutS_con_dom_sf"/>
</dbReference>
<dbReference type="InterPro" id="IPR027417">
    <property type="entry name" value="P-loop_NTPase"/>
</dbReference>
<dbReference type="NCBIfam" id="TIGR01070">
    <property type="entry name" value="mutS1"/>
    <property type="match status" value="1"/>
</dbReference>
<dbReference type="NCBIfam" id="NF003810">
    <property type="entry name" value="PRK05399.1"/>
    <property type="match status" value="1"/>
</dbReference>
<dbReference type="PANTHER" id="PTHR11361:SF34">
    <property type="entry name" value="DNA MISMATCH REPAIR PROTEIN MSH1, MITOCHONDRIAL"/>
    <property type="match status" value="1"/>
</dbReference>
<dbReference type="PANTHER" id="PTHR11361">
    <property type="entry name" value="DNA MISMATCH REPAIR PROTEIN MUTS FAMILY MEMBER"/>
    <property type="match status" value="1"/>
</dbReference>
<dbReference type="Pfam" id="PF01624">
    <property type="entry name" value="MutS_I"/>
    <property type="match status" value="1"/>
</dbReference>
<dbReference type="Pfam" id="PF05188">
    <property type="entry name" value="MutS_II"/>
    <property type="match status" value="1"/>
</dbReference>
<dbReference type="Pfam" id="PF05192">
    <property type="entry name" value="MutS_III"/>
    <property type="match status" value="1"/>
</dbReference>
<dbReference type="Pfam" id="PF05190">
    <property type="entry name" value="MutS_IV"/>
    <property type="match status" value="1"/>
</dbReference>
<dbReference type="Pfam" id="PF00488">
    <property type="entry name" value="MutS_V"/>
    <property type="match status" value="1"/>
</dbReference>
<dbReference type="PIRSF" id="PIRSF037677">
    <property type="entry name" value="DNA_mis_repair_Msh6"/>
    <property type="match status" value="1"/>
</dbReference>
<dbReference type="SMART" id="SM00534">
    <property type="entry name" value="MUTSac"/>
    <property type="match status" value="1"/>
</dbReference>
<dbReference type="SMART" id="SM00533">
    <property type="entry name" value="MUTSd"/>
    <property type="match status" value="1"/>
</dbReference>
<dbReference type="SUPFAM" id="SSF55271">
    <property type="entry name" value="DNA repair protein MutS, domain I"/>
    <property type="match status" value="1"/>
</dbReference>
<dbReference type="SUPFAM" id="SSF53150">
    <property type="entry name" value="DNA repair protein MutS, domain II"/>
    <property type="match status" value="1"/>
</dbReference>
<dbReference type="SUPFAM" id="SSF48334">
    <property type="entry name" value="DNA repair protein MutS, domain III"/>
    <property type="match status" value="1"/>
</dbReference>
<dbReference type="SUPFAM" id="SSF52540">
    <property type="entry name" value="P-loop containing nucleoside triphosphate hydrolases"/>
    <property type="match status" value="1"/>
</dbReference>
<dbReference type="PROSITE" id="PS00486">
    <property type="entry name" value="DNA_MISMATCH_REPAIR_2"/>
    <property type="match status" value="1"/>
</dbReference>
<name>MUTS_PHOV8</name>
<sequence length="870" mass="97836">MANDVVLTPMMKQFFELKAKHPDAIMLFRCGDFYETYSEDAIVASEILGITLTKRANGQAKSVEMAGFPFHALDTYLPKLVRAGKRVAICDQLEDPKMTKKLVKRGITELVTPGVAINDNVLSYKENNFLAAVHFGKASCGVAFLDISTGEFLTAEGPFDYIDKLLNNFAPKEVLFERGKRGMFEGNFGSKFFTFELDDWVFNESSSREKLLKHFETKNLKGFGVEHLKNGIVASGAILQYLNMTQHYQIGHITSLSRIEEDRYVRLDKFTVRSLELIGSMNEGGTSLLDVIDRTISPMGARLLKRWVVFPLKDEKPVNERLDVVEYFFREPDFKEFIEEKLHLIGDLERIVSKAAVGRISPREVVQLKVALQAIEPIKNACLNADNGSLRRIGEQLNLCLSIREKIAKEVKNDPPLLVNKGGVIADGVNAELDELRQIAFSGKDYLLKVQQRESELTGIPSLKIAYNNVFGYYIEVRNTHKDKVPADWIRKQTLVNAERYITQELKEYEEKILGAEDKILVLETKLYNELVVALAEFIPAIQINASQIARLDCLLAFANVAKENNYIRPVVEDSEVIDIRQGRHPVIEKQLPVGEKYIANDVFLDSETQQIIIITGPNMAGKSALLRQTALITLLAQMGSFVPAESARIGMVDKIFTRVGASDNISVGESTFMVEMNEAANILNNLSSRSLVLFDELGRGTSTYDGISIAWAIVEHIHEHPKAKARTLFATHYHELNEMEKSFKRIKNYNVSVKEIDNKVIFLRKLERGGSEHSFGIHVAKMAGMPKSIVKRANDILHQLETDNRQQGIAKPTAEIASGRSGMQLSFFQLDDPVLSQIRDEILNLDVNNLTPLEALNKLNDIKKIVKGK</sequence>
<proteinExistence type="inferred from homology"/>
<reference key="1">
    <citation type="journal article" date="2007" name="PLoS Biol.">
        <title>Evolution of symbiotic bacteria in the distal human intestine.</title>
        <authorList>
            <person name="Xu J."/>
            <person name="Mahowald M.A."/>
            <person name="Ley R.E."/>
            <person name="Lozupone C.A."/>
            <person name="Hamady M."/>
            <person name="Martens E.C."/>
            <person name="Henrissat B."/>
            <person name="Coutinho P.M."/>
            <person name="Minx P."/>
            <person name="Latreille P."/>
            <person name="Cordum H."/>
            <person name="Van Brunt A."/>
            <person name="Kim K."/>
            <person name="Fulton R.S."/>
            <person name="Fulton L.A."/>
            <person name="Clifton S.W."/>
            <person name="Wilson R.K."/>
            <person name="Knight R.D."/>
            <person name="Gordon J.I."/>
        </authorList>
    </citation>
    <scope>NUCLEOTIDE SEQUENCE [LARGE SCALE GENOMIC DNA]</scope>
    <source>
        <strain>ATCC 8482 / DSM 1447 / JCM 5826 / CCUG 4940 / NBRC 14291 / NCTC 11154</strain>
    </source>
</reference>
<gene>
    <name evidence="1" type="primary">mutS</name>
    <name type="ordered locus">BVU_1195</name>
</gene>
<evidence type="ECO:0000255" key="1">
    <source>
        <dbReference type="HAMAP-Rule" id="MF_00096"/>
    </source>
</evidence>